<evidence type="ECO:0000250" key="1"/>
<evidence type="ECO:0000255" key="2"/>
<evidence type="ECO:0000269" key="3">
    <source>
    </source>
</evidence>
<evidence type="ECO:0000269" key="4">
    <source>
    </source>
</evidence>
<evidence type="ECO:0000269" key="5">
    <source>
    </source>
</evidence>
<evidence type="ECO:0000269" key="6">
    <source>
    </source>
</evidence>
<evidence type="ECO:0000269" key="7">
    <source>
    </source>
</evidence>
<evidence type="ECO:0000305" key="8"/>
<accession>Q8N4F0</accession>
<accession>Q6UWN3</accession>
<accession>Q6ZME0</accession>
<accession>Q8NFQ7</accession>
<proteinExistence type="evidence at protein level"/>
<gene>
    <name type="primary">BPIFB2</name>
    <name type="synonym">BPIL1</name>
    <name type="synonym">C20orf184</name>
    <name type="synonym">LPLUNC2</name>
    <name type="ORF">UNQ2489/PRO5776</name>
</gene>
<dbReference type="EMBL" id="AF465765">
    <property type="protein sequence ID" value="AAM73983.1"/>
    <property type="molecule type" value="mRNA"/>
</dbReference>
<dbReference type="EMBL" id="AY358723">
    <property type="protein sequence ID" value="AAQ89085.1"/>
    <property type="molecule type" value="mRNA"/>
</dbReference>
<dbReference type="EMBL" id="AK172819">
    <property type="protein sequence ID" value="BAD18788.1"/>
    <property type="molecule type" value="mRNA"/>
</dbReference>
<dbReference type="EMBL" id="AL121756">
    <property type="status" value="NOT_ANNOTATED_CDS"/>
    <property type="molecule type" value="Genomic_DNA"/>
</dbReference>
<dbReference type="EMBL" id="CH471077">
    <property type="protein sequence ID" value="EAW76341.1"/>
    <property type="molecule type" value="Genomic_DNA"/>
</dbReference>
<dbReference type="EMBL" id="BC034415">
    <property type="protein sequence ID" value="AAH34415.1"/>
    <property type="molecule type" value="mRNA"/>
</dbReference>
<dbReference type="CCDS" id="CCDS13210.1"/>
<dbReference type="RefSeq" id="NP_079503.1">
    <property type="nucleotide sequence ID" value="NM_025227.3"/>
</dbReference>
<dbReference type="SMR" id="Q8N4F0"/>
<dbReference type="BioGRID" id="123248">
    <property type="interactions" value="13"/>
</dbReference>
<dbReference type="FunCoup" id="Q8N4F0">
    <property type="interactions" value="114"/>
</dbReference>
<dbReference type="IntAct" id="Q8N4F0">
    <property type="interactions" value="9"/>
</dbReference>
<dbReference type="STRING" id="9606.ENSP00000170150"/>
<dbReference type="TCDB" id="1.C.40.1.6">
    <property type="family name" value="the bactericidal permeability increasing protein (bpip) family"/>
</dbReference>
<dbReference type="CarbonylDB" id="Q8N4F0"/>
<dbReference type="GlyCosmos" id="Q8N4F0">
    <property type="glycosylation" value="4 sites, No reported glycans"/>
</dbReference>
<dbReference type="GlyGen" id="Q8N4F0">
    <property type="glycosylation" value="4 sites"/>
</dbReference>
<dbReference type="iPTMnet" id="Q8N4F0"/>
<dbReference type="PhosphoSitePlus" id="Q8N4F0"/>
<dbReference type="BioMuta" id="BPIFB2"/>
<dbReference type="DMDM" id="62298542"/>
<dbReference type="jPOST" id="Q8N4F0"/>
<dbReference type="MassIVE" id="Q8N4F0"/>
<dbReference type="PaxDb" id="9606-ENSP00000170150"/>
<dbReference type="PeptideAtlas" id="Q8N4F0"/>
<dbReference type="PRIDE" id="Q8N4F0"/>
<dbReference type="ProteomicsDB" id="71926"/>
<dbReference type="Antibodypedia" id="25479">
    <property type="antibodies" value="115 antibodies from 25 providers"/>
</dbReference>
<dbReference type="DNASU" id="80341"/>
<dbReference type="Ensembl" id="ENST00000170150.4">
    <property type="protein sequence ID" value="ENSP00000170150.3"/>
    <property type="gene ID" value="ENSG00000078898.7"/>
</dbReference>
<dbReference type="GeneID" id="80341"/>
<dbReference type="KEGG" id="hsa:80341"/>
<dbReference type="MANE-Select" id="ENST00000170150.4">
    <property type="protein sequence ID" value="ENSP00000170150.3"/>
    <property type="RefSeq nucleotide sequence ID" value="NM_025227.3"/>
    <property type="RefSeq protein sequence ID" value="NP_079503.1"/>
</dbReference>
<dbReference type="UCSC" id="uc002wyj.5">
    <property type="organism name" value="human"/>
</dbReference>
<dbReference type="AGR" id="HGNC:16177"/>
<dbReference type="CTD" id="80341"/>
<dbReference type="DisGeNET" id="80341"/>
<dbReference type="GeneCards" id="BPIFB2"/>
<dbReference type="HGNC" id="HGNC:16177">
    <property type="gene designation" value="BPIFB2"/>
</dbReference>
<dbReference type="HPA" id="ENSG00000078898">
    <property type="expression patterns" value="Tissue enriched (salivary)"/>
</dbReference>
<dbReference type="MIM" id="614108">
    <property type="type" value="gene"/>
</dbReference>
<dbReference type="neXtProt" id="NX_Q8N4F0"/>
<dbReference type="OpenTargets" id="ENSG00000078898"/>
<dbReference type="PharmGKB" id="PA25404"/>
<dbReference type="VEuPathDB" id="HostDB:ENSG00000078898"/>
<dbReference type="eggNOG" id="KOG4160">
    <property type="taxonomic scope" value="Eukaryota"/>
</dbReference>
<dbReference type="GeneTree" id="ENSGT01100000263546"/>
<dbReference type="HOGENOM" id="CLU_597102_0_0_1"/>
<dbReference type="InParanoid" id="Q8N4F0"/>
<dbReference type="OMA" id="RYSMINA"/>
<dbReference type="OrthoDB" id="9831346at2759"/>
<dbReference type="PAN-GO" id="Q8N4F0">
    <property type="GO annotations" value="0 GO annotations based on evolutionary models"/>
</dbReference>
<dbReference type="PhylomeDB" id="Q8N4F0"/>
<dbReference type="TreeFam" id="TF315617"/>
<dbReference type="PathwayCommons" id="Q8N4F0"/>
<dbReference type="Reactome" id="R-HSA-381426">
    <property type="pathway name" value="Regulation of Insulin-like Growth Factor (IGF) transport and uptake by Insulin-like Growth Factor Binding Proteins (IGFBPs)"/>
</dbReference>
<dbReference type="Reactome" id="R-HSA-6803157">
    <property type="pathway name" value="Antimicrobial peptides"/>
</dbReference>
<dbReference type="Reactome" id="R-HSA-8957275">
    <property type="pathway name" value="Post-translational protein phosphorylation"/>
</dbReference>
<dbReference type="SignaLink" id="Q8N4F0"/>
<dbReference type="BioGRID-ORCS" id="80341">
    <property type="hits" value="13 hits in 1147 CRISPR screens"/>
</dbReference>
<dbReference type="GeneWiki" id="BPIL1"/>
<dbReference type="GenomeRNAi" id="80341"/>
<dbReference type="Pharos" id="Q8N4F0">
    <property type="development level" value="Tbio"/>
</dbReference>
<dbReference type="PRO" id="PR:Q8N4F0"/>
<dbReference type="Proteomes" id="UP000005640">
    <property type="component" value="Chromosome 20"/>
</dbReference>
<dbReference type="RNAct" id="Q8N4F0">
    <property type="molecule type" value="protein"/>
</dbReference>
<dbReference type="Bgee" id="ENSG00000078898">
    <property type="expression patterns" value="Expressed in trachea and 99 other cell types or tissues"/>
</dbReference>
<dbReference type="GO" id="GO:0005788">
    <property type="term" value="C:endoplasmic reticulum lumen"/>
    <property type="evidence" value="ECO:0000304"/>
    <property type="project" value="Reactome"/>
</dbReference>
<dbReference type="GO" id="GO:0070062">
    <property type="term" value="C:extracellular exosome"/>
    <property type="evidence" value="ECO:0007005"/>
    <property type="project" value="UniProtKB"/>
</dbReference>
<dbReference type="GO" id="GO:0005576">
    <property type="term" value="C:extracellular region"/>
    <property type="evidence" value="ECO:0000304"/>
    <property type="project" value="Reactome"/>
</dbReference>
<dbReference type="GO" id="GO:0008289">
    <property type="term" value="F:lipid binding"/>
    <property type="evidence" value="ECO:0007669"/>
    <property type="project" value="InterPro"/>
</dbReference>
<dbReference type="CDD" id="cd00026">
    <property type="entry name" value="BPI2"/>
    <property type="match status" value="1"/>
</dbReference>
<dbReference type="FunFam" id="3.15.10.10:FF:000005">
    <property type="entry name" value="BPI fold containing family B member 2"/>
    <property type="match status" value="1"/>
</dbReference>
<dbReference type="FunFam" id="3.15.20.10:FF:000004">
    <property type="entry name" value="BPI fold containing family B member 2"/>
    <property type="match status" value="1"/>
</dbReference>
<dbReference type="Gene3D" id="3.15.10.10">
    <property type="entry name" value="Bactericidal permeability-increasing protein, domain 1"/>
    <property type="match status" value="1"/>
</dbReference>
<dbReference type="Gene3D" id="3.15.20.10">
    <property type="entry name" value="Bactericidal permeability-increasing protein, domain 2"/>
    <property type="match status" value="1"/>
</dbReference>
<dbReference type="InterPro" id="IPR017943">
    <property type="entry name" value="Bactericidal_perm-incr_a/b_dom"/>
</dbReference>
<dbReference type="InterPro" id="IPR030675">
    <property type="entry name" value="BPI/LBP"/>
</dbReference>
<dbReference type="InterPro" id="IPR051660">
    <property type="entry name" value="BPI_fold-BPI/LBP"/>
</dbReference>
<dbReference type="InterPro" id="IPR001124">
    <property type="entry name" value="Lipid-bd_serum_glycop_C"/>
</dbReference>
<dbReference type="InterPro" id="IPR017942">
    <property type="entry name" value="Lipid-bd_serum_glycop_N"/>
</dbReference>
<dbReference type="PANTHER" id="PTHR46019:SF1">
    <property type="entry name" value="BPI FOLD-CONTAINING FAMILY B MEMBER 2"/>
    <property type="match status" value="1"/>
</dbReference>
<dbReference type="PANTHER" id="PTHR46019">
    <property type="entry name" value="BPI FOLD-CONTAINING FAMILY B MEMBER 4-RELATED"/>
    <property type="match status" value="1"/>
</dbReference>
<dbReference type="Pfam" id="PF01273">
    <property type="entry name" value="LBP_BPI_CETP"/>
    <property type="match status" value="1"/>
</dbReference>
<dbReference type="Pfam" id="PF02886">
    <property type="entry name" value="LBP_BPI_CETP_C"/>
    <property type="match status" value="1"/>
</dbReference>
<dbReference type="PIRSF" id="PIRSF002417">
    <property type="entry name" value="Lipid_binding_protein"/>
    <property type="match status" value="1"/>
</dbReference>
<dbReference type="SMART" id="SM00329">
    <property type="entry name" value="BPI2"/>
    <property type="match status" value="1"/>
</dbReference>
<dbReference type="SUPFAM" id="SSF55394">
    <property type="entry name" value="Bactericidal permeability-increasing protein, BPI"/>
    <property type="match status" value="2"/>
</dbReference>
<comment type="subcellular location">
    <subcellularLocation>
        <location evidence="1">Secreted</location>
    </subcellularLocation>
</comment>
<comment type="tissue specificity">
    <text evidence="3">Highly expressed in tonsils, especially in hypertrophic tonsils. Detected at very low levels in fetal liver.</text>
</comment>
<comment type="similarity">
    <text evidence="8">Belongs to the BPI/LBP/Plunc superfamily. BPI/LBP family.</text>
</comment>
<sequence length="458" mass="49172">MAWASRLGLLLALLLPVVGASTPGTVVRLNKAALSYVSEIGKAPLQRALQVTVPHFLDWSGEALQPTRIRILNVHVPRLHLKFIAGFGVRLLAAANFTFKVFRAPEPLELTLPVELLADTRVTQSSIRTPVVSISACSLFSGHANEFDGSNSTSHALLVLVQKHIKAVLSNKLCLSISNLVQGVNVHLGTLIGLNPVGPESQIRYSMVSVPTVTSDYISLEVNAVLFLLGKPIILPTDATPFVLPRHVGTEGSMATVGLSQQLFDSALLLLQKAGALNLDITGQLRSDDNLLNTSALGRLIPEVARQFPEPMPVVLKVRLGATPVAMLHTNNATLRLQPFVEVLATASNSAFQSLFSLDVVVNLRLQLSVSKVKLQGTTSVLGDVQLTVASSNVGFIDTDQVRTLMGTVFEKPLLDHLNALLAMGIALPGVVNLHYVAPEIFVYEGYVVISSGLFYQS</sequence>
<name>BPIB2_HUMAN</name>
<keyword id="KW-0903">Direct protein sequencing</keyword>
<keyword id="KW-1015">Disulfide bond</keyword>
<keyword id="KW-0325">Glycoprotein</keyword>
<keyword id="KW-0597">Phosphoprotein</keyword>
<keyword id="KW-1267">Proteomics identification</keyword>
<keyword id="KW-1185">Reference proteome</keyword>
<keyword id="KW-0964">Secreted</keyword>
<keyword id="KW-0732">Signal</keyword>
<reference key="1">
    <citation type="journal article" date="2002" name="Immunogenetics">
        <title>Three new human members of the lipid transfer/lipopolysaccharide binding protein family (LT/LBP).</title>
        <authorList>
            <person name="Mulero J.J."/>
            <person name="Boyle B.J."/>
            <person name="Bradley S."/>
            <person name="Bright J.M."/>
            <person name="Nelken S.T."/>
            <person name="Ho T.T."/>
            <person name="Mize N.K."/>
            <person name="Childs J.D."/>
            <person name="Ballinger D.G."/>
            <person name="Ford J.E."/>
            <person name="Rupp F."/>
        </authorList>
    </citation>
    <scope>NUCLEOTIDE SEQUENCE [MRNA]</scope>
    <source>
        <tissue>Trachea</tissue>
    </source>
</reference>
<reference key="2">
    <citation type="journal article" date="2003" name="Genome Res.">
        <title>The secreted protein discovery initiative (SPDI), a large-scale effort to identify novel human secreted and transmembrane proteins: a bioinformatics assessment.</title>
        <authorList>
            <person name="Clark H.F."/>
            <person name="Gurney A.L."/>
            <person name="Abaya E."/>
            <person name="Baker K."/>
            <person name="Baldwin D.T."/>
            <person name="Brush J."/>
            <person name="Chen J."/>
            <person name="Chow B."/>
            <person name="Chui C."/>
            <person name="Crowley C."/>
            <person name="Currell B."/>
            <person name="Deuel B."/>
            <person name="Dowd P."/>
            <person name="Eaton D."/>
            <person name="Foster J.S."/>
            <person name="Grimaldi C."/>
            <person name="Gu Q."/>
            <person name="Hass P.E."/>
            <person name="Heldens S."/>
            <person name="Huang A."/>
            <person name="Kim H.S."/>
            <person name="Klimowski L."/>
            <person name="Jin Y."/>
            <person name="Johnson S."/>
            <person name="Lee J."/>
            <person name="Lewis L."/>
            <person name="Liao D."/>
            <person name="Mark M.R."/>
            <person name="Robbie E."/>
            <person name="Sanchez C."/>
            <person name="Schoenfeld J."/>
            <person name="Seshagiri S."/>
            <person name="Simmons L."/>
            <person name="Singh J."/>
            <person name="Smith V."/>
            <person name="Stinson J."/>
            <person name="Vagts A."/>
            <person name="Vandlen R.L."/>
            <person name="Watanabe C."/>
            <person name="Wieand D."/>
            <person name="Woods K."/>
            <person name="Xie M.-H."/>
            <person name="Yansura D.G."/>
            <person name="Yi S."/>
            <person name="Yu G."/>
            <person name="Yuan J."/>
            <person name="Zhang M."/>
            <person name="Zhang Z."/>
            <person name="Goddard A.D."/>
            <person name="Wood W.I."/>
            <person name="Godowski P.J."/>
            <person name="Gray A.M."/>
        </authorList>
    </citation>
    <scope>NUCLEOTIDE SEQUENCE [LARGE SCALE MRNA]</scope>
</reference>
<reference key="3">
    <citation type="journal article" date="2004" name="Nat. Genet.">
        <title>Complete sequencing and characterization of 21,243 full-length human cDNAs.</title>
        <authorList>
            <person name="Ota T."/>
            <person name="Suzuki Y."/>
            <person name="Nishikawa T."/>
            <person name="Otsuki T."/>
            <person name="Sugiyama T."/>
            <person name="Irie R."/>
            <person name="Wakamatsu A."/>
            <person name="Hayashi K."/>
            <person name="Sato H."/>
            <person name="Nagai K."/>
            <person name="Kimura K."/>
            <person name="Makita H."/>
            <person name="Sekine M."/>
            <person name="Obayashi M."/>
            <person name="Nishi T."/>
            <person name="Shibahara T."/>
            <person name="Tanaka T."/>
            <person name="Ishii S."/>
            <person name="Yamamoto J."/>
            <person name="Saito K."/>
            <person name="Kawai Y."/>
            <person name="Isono Y."/>
            <person name="Nakamura Y."/>
            <person name="Nagahari K."/>
            <person name="Murakami K."/>
            <person name="Yasuda T."/>
            <person name="Iwayanagi T."/>
            <person name="Wagatsuma M."/>
            <person name="Shiratori A."/>
            <person name="Sudo H."/>
            <person name="Hosoiri T."/>
            <person name="Kaku Y."/>
            <person name="Kodaira H."/>
            <person name="Kondo H."/>
            <person name="Sugawara M."/>
            <person name="Takahashi M."/>
            <person name="Kanda K."/>
            <person name="Yokoi T."/>
            <person name="Furuya T."/>
            <person name="Kikkawa E."/>
            <person name="Omura Y."/>
            <person name="Abe K."/>
            <person name="Kamihara K."/>
            <person name="Katsuta N."/>
            <person name="Sato K."/>
            <person name="Tanikawa M."/>
            <person name="Yamazaki M."/>
            <person name="Ninomiya K."/>
            <person name="Ishibashi T."/>
            <person name="Yamashita H."/>
            <person name="Murakawa K."/>
            <person name="Fujimori K."/>
            <person name="Tanai H."/>
            <person name="Kimata M."/>
            <person name="Watanabe M."/>
            <person name="Hiraoka S."/>
            <person name="Chiba Y."/>
            <person name="Ishida S."/>
            <person name="Ono Y."/>
            <person name="Takiguchi S."/>
            <person name="Watanabe S."/>
            <person name="Yosida M."/>
            <person name="Hotuta T."/>
            <person name="Kusano J."/>
            <person name="Kanehori K."/>
            <person name="Takahashi-Fujii A."/>
            <person name="Hara H."/>
            <person name="Tanase T.-O."/>
            <person name="Nomura Y."/>
            <person name="Togiya S."/>
            <person name="Komai F."/>
            <person name="Hara R."/>
            <person name="Takeuchi K."/>
            <person name="Arita M."/>
            <person name="Imose N."/>
            <person name="Musashino K."/>
            <person name="Yuuki H."/>
            <person name="Oshima A."/>
            <person name="Sasaki N."/>
            <person name="Aotsuka S."/>
            <person name="Yoshikawa Y."/>
            <person name="Matsunawa H."/>
            <person name="Ichihara T."/>
            <person name="Shiohata N."/>
            <person name="Sano S."/>
            <person name="Moriya S."/>
            <person name="Momiyama H."/>
            <person name="Satoh N."/>
            <person name="Takami S."/>
            <person name="Terashima Y."/>
            <person name="Suzuki O."/>
            <person name="Nakagawa S."/>
            <person name="Senoh A."/>
            <person name="Mizoguchi H."/>
            <person name="Goto Y."/>
            <person name="Shimizu F."/>
            <person name="Wakebe H."/>
            <person name="Hishigaki H."/>
            <person name="Watanabe T."/>
            <person name="Sugiyama A."/>
            <person name="Takemoto M."/>
            <person name="Kawakami B."/>
            <person name="Yamazaki M."/>
            <person name="Watanabe K."/>
            <person name="Kumagai A."/>
            <person name="Itakura S."/>
            <person name="Fukuzumi Y."/>
            <person name="Fujimori Y."/>
            <person name="Komiyama M."/>
            <person name="Tashiro H."/>
            <person name="Tanigami A."/>
            <person name="Fujiwara T."/>
            <person name="Ono T."/>
            <person name="Yamada K."/>
            <person name="Fujii Y."/>
            <person name="Ozaki K."/>
            <person name="Hirao M."/>
            <person name="Ohmori Y."/>
            <person name="Kawabata A."/>
            <person name="Hikiji T."/>
            <person name="Kobatake N."/>
            <person name="Inagaki H."/>
            <person name="Ikema Y."/>
            <person name="Okamoto S."/>
            <person name="Okitani R."/>
            <person name="Kawakami T."/>
            <person name="Noguchi S."/>
            <person name="Itoh T."/>
            <person name="Shigeta K."/>
            <person name="Senba T."/>
            <person name="Matsumura K."/>
            <person name="Nakajima Y."/>
            <person name="Mizuno T."/>
            <person name="Morinaga M."/>
            <person name="Sasaki M."/>
            <person name="Togashi T."/>
            <person name="Oyama M."/>
            <person name="Hata H."/>
            <person name="Watanabe M."/>
            <person name="Komatsu T."/>
            <person name="Mizushima-Sugano J."/>
            <person name="Satoh T."/>
            <person name="Shirai Y."/>
            <person name="Takahashi Y."/>
            <person name="Nakagawa K."/>
            <person name="Okumura K."/>
            <person name="Nagase T."/>
            <person name="Nomura N."/>
            <person name="Kikuchi H."/>
            <person name="Masuho Y."/>
            <person name="Yamashita R."/>
            <person name="Nakai K."/>
            <person name="Yada T."/>
            <person name="Nakamura Y."/>
            <person name="Ohara O."/>
            <person name="Isogai T."/>
            <person name="Sugano S."/>
        </authorList>
    </citation>
    <scope>NUCLEOTIDE SEQUENCE [LARGE SCALE MRNA]</scope>
</reference>
<reference key="4">
    <citation type="journal article" date="2001" name="Nature">
        <title>The DNA sequence and comparative analysis of human chromosome 20.</title>
        <authorList>
            <person name="Deloukas P."/>
            <person name="Matthews L.H."/>
            <person name="Ashurst J.L."/>
            <person name="Burton J."/>
            <person name="Gilbert J.G.R."/>
            <person name="Jones M."/>
            <person name="Stavrides G."/>
            <person name="Almeida J.P."/>
            <person name="Babbage A.K."/>
            <person name="Bagguley C.L."/>
            <person name="Bailey J."/>
            <person name="Barlow K.F."/>
            <person name="Bates K.N."/>
            <person name="Beard L.M."/>
            <person name="Beare D.M."/>
            <person name="Beasley O.P."/>
            <person name="Bird C.P."/>
            <person name="Blakey S.E."/>
            <person name="Bridgeman A.M."/>
            <person name="Brown A.J."/>
            <person name="Buck D."/>
            <person name="Burrill W.D."/>
            <person name="Butler A.P."/>
            <person name="Carder C."/>
            <person name="Carter N.P."/>
            <person name="Chapman J.C."/>
            <person name="Clamp M."/>
            <person name="Clark G."/>
            <person name="Clark L.N."/>
            <person name="Clark S.Y."/>
            <person name="Clee C.M."/>
            <person name="Clegg S."/>
            <person name="Cobley V.E."/>
            <person name="Collier R.E."/>
            <person name="Connor R.E."/>
            <person name="Corby N.R."/>
            <person name="Coulson A."/>
            <person name="Coville G.J."/>
            <person name="Deadman R."/>
            <person name="Dhami P.D."/>
            <person name="Dunn M."/>
            <person name="Ellington A.G."/>
            <person name="Frankland J.A."/>
            <person name="Fraser A."/>
            <person name="French L."/>
            <person name="Garner P."/>
            <person name="Grafham D.V."/>
            <person name="Griffiths C."/>
            <person name="Griffiths M.N.D."/>
            <person name="Gwilliam R."/>
            <person name="Hall R.E."/>
            <person name="Hammond S."/>
            <person name="Harley J.L."/>
            <person name="Heath P.D."/>
            <person name="Ho S."/>
            <person name="Holden J.L."/>
            <person name="Howden P.J."/>
            <person name="Huckle E."/>
            <person name="Hunt A.R."/>
            <person name="Hunt S.E."/>
            <person name="Jekosch K."/>
            <person name="Johnson C.M."/>
            <person name="Johnson D."/>
            <person name="Kay M.P."/>
            <person name="Kimberley A.M."/>
            <person name="King A."/>
            <person name="Knights A."/>
            <person name="Laird G.K."/>
            <person name="Lawlor S."/>
            <person name="Lehvaeslaiho M.H."/>
            <person name="Leversha M.A."/>
            <person name="Lloyd C."/>
            <person name="Lloyd D.M."/>
            <person name="Lovell J.D."/>
            <person name="Marsh V.L."/>
            <person name="Martin S.L."/>
            <person name="McConnachie L.J."/>
            <person name="McLay K."/>
            <person name="McMurray A.A."/>
            <person name="Milne S.A."/>
            <person name="Mistry D."/>
            <person name="Moore M.J.F."/>
            <person name="Mullikin J.C."/>
            <person name="Nickerson T."/>
            <person name="Oliver K."/>
            <person name="Parker A."/>
            <person name="Patel R."/>
            <person name="Pearce T.A.V."/>
            <person name="Peck A.I."/>
            <person name="Phillimore B.J.C.T."/>
            <person name="Prathalingam S.R."/>
            <person name="Plumb R.W."/>
            <person name="Ramsay H."/>
            <person name="Rice C.M."/>
            <person name="Ross M.T."/>
            <person name="Scott C.E."/>
            <person name="Sehra H.K."/>
            <person name="Shownkeen R."/>
            <person name="Sims S."/>
            <person name="Skuce C.D."/>
            <person name="Smith M.L."/>
            <person name="Soderlund C."/>
            <person name="Steward C.A."/>
            <person name="Sulston J.E."/>
            <person name="Swann R.M."/>
            <person name="Sycamore N."/>
            <person name="Taylor R."/>
            <person name="Tee L."/>
            <person name="Thomas D.W."/>
            <person name="Thorpe A."/>
            <person name="Tracey A."/>
            <person name="Tromans A.C."/>
            <person name="Vaudin M."/>
            <person name="Wall M."/>
            <person name="Wallis J.M."/>
            <person name="Whitehead S.L."/>
            <person name="Whittaker P."/>
            <person name="Willey D.L."/>
            <person name="Williams L."/>
            <person name="Williams S.A."/>
            <person name="Wilming L."/>
            <person name="Wray P.W."/>
            <person name="Hubbard T."/>
            <person name="Durbin R.M."/>
            <person name="Bentley D.R."/>
            <person name="Beck S."/>
            <person name="Rogers J."/>
        </authorList>
    </citation>
    <scope>NUCLEOTIDE SEQUENCE [LARGE SCALE GENOMIC DNA]</scope>
</reference>
<reference key="5">
    <citation type="submission" date="2005-09" db="EMBL/GenBank/DDBJ databases">
        <authorList>
            <person name="Mural R.J."/>
            <person name="Istrail S."/>
            <person name="Sutton G."/>
            <person name="Florea L."/>
            <person name="Halpern A.L."/>
            <person name="Mobarry C.M."/>
            <person name="Lippert R."/>
            <person name="Walenz B."/>
            <person name="Shatkay H."/>
            <person name="Dew I."/>
            <person name="Miller J.R."/>
            <person name="Flanigan M.J."/>
            <person name="Edwards N.J."/>
            <person name="Bolanos R."/>
            <person name="Fasulo D."/>
            <person name="Halldorsson B.V."/>
            <person name="Hannenhalli S."/>
            <person name="Turner R."/>
            <person name="Yooseph S."/>
            <person name="Lu F."/>
            <person name="Nusskern D.R."/>
            <person name="Shue B.C."/>
            <person name="Zheng X.H."/>
            <person name="Zhong F."/>
            <person name="Delcher A.L."/>
            <person name="Huson D.H."/>
            <person name="Kravitz S.A."/>
            <person name="Mouchard L."/>
            <person name="Reinert K."/>
            <person name="Remington K.A."/>
            <person name="Clark A.G."/>
            <person name="Waterman M.S."/>
            <person name="Eichler E.E."/>
            <person name="Adams M.D."/>
            <person name="Hunkapiller M.W."/>
            <person name="Myers E.W."/>
            <person name="Venter J.C."/>
        </authorList>
    </citation>
    <scope>NUCLEOTIDE SEQUENCE [LARGE SCALE GENOMIC DNA]</scope>
</reference>
<reference key="6">
    <citation type="journal article" date="2004" name="Genome Res.">
        <title>The status, quality, and expansion of the NIH full-length cDNA project: the Mammalian Gene Collection (MGC).</title>
        <authorList>
            <consortium name="The MGC Project Team"/>
        </authorList>
    </citation>
    <scope>NUCLEOTIDE SEQUENCE [LARGE SCALE MRNA]</scope>
    <source>
        <tissue>Brain</tissue>
        <tissue>Lung</tissue>
        <tissue>Testis</tissue>
    </source>
</reference>
<reference key="7">
    <citation type="journal article" date="2004" name="Protein Sci.">
        <title>Signal peptide prediction based on analysis of experimentally verified cleavage sites.</title>
        <authorList>
            <person name="Zhang Z."/>
            <person name="Henzel W.J."/>
        </authorList>
    </citation>
    <scope>PROTEIN SEQUENCE OF 21-35</scope>
</reference>
<reference key="8">
    <citation type="journal article" date="2003" name="Genomics">
        <title>Expansion of the BPI family by duplication on human chromosome 20: characterization of the RY gene cluster in 20q11.21 encoding olfactory transporters/antimicrobial-like peptides.</title>
        <authorList>
            <person name="Andrault J.-B."/>
            <person name="Gaillard I."/>
            <person name="Giorgi D."/>
            <person name="Rouquier S."/>
        </authorList>
    </citation>
    <scope>SUBCELLULAR LOCATION</scope>
    <scope>TISSUE SPECIFICITY</scope>
    <source>
        <tissue>Fetal brain</tissue>
    </source>
</reference>
<reference key="9">
    <citation type="journal article" date="2015" name="Cell">
        <title>A single kinase generates the majority of the secreted phosphoproteome.</title>
        <authorList>
            <person name="Tagliabracci V.S."/>
            <person name="Wiley S.E."/>
            <person name="Guo X."/>
            <person name="Kinch L.N."/>
            <person name="Durrant E."/>
            <person name="Wen J."/>
            <person name="Xiao J."/>
            <person name="Cui J."/>
            <person name="Nguyen K.B."/>
            <person name="Engel J.L."/>
            <person name="Coon J.J."/>
            <person name="Grishin N."/>
            <person name="Pinna L.A."/>
            <person name="Pagliarini D.J."/>
            <person name="Dixon J.E."/>
        </authorList>
    </citation>
    <scope>PHOSPHORYLATION AT THR-52 AND SER-60</scope>
</reference>
<reference key="10">
    <citation type="journal article" date="2006" name="J. Proteome Res.">
        <title>Identification of N-linked glycoproteins in human saliva by glycoprotein capture and mass spectrometry.</title>
        <authorList>
            <person name="Ramachandran P."/>
            <person name="Boontheung P."/>
            <person name="Xie Y."/>
            <person name="Sondej M."/>
            <person name="Wong D.T."/>
            <person name="Loo J.A."/>
        </authorList>
    </citation>
    <scope>GLYCOSYLATION [LARGE SCALE ANALYSIS] AT ASN-96; ASN-293 AND ASN-332</scope>
    <source>
        <tissue>Saliva</tissue>
    </source>
</reference>
<reference key="11">
    <citation type="journal article" date="2006" name="Science">
        <title>The consensus coding sequences of human breast and colorectal cancers.</title>
        <authorList>
            <person name="Sjoeblom T."/>
            <person name="Jones S."/>
            <person name="Wood L.D."/>
            <person name="Parsons D.W."/>
            <person name="Lin J."/>
            <person name="Barber T.D."/>
            <person name="Mandelker D."/>
            <person name="Leary R.J."/>
            <person name="Ptak J."/>
            <person name="Silliman N."/>
            <person name="Szabo S."/>
            <person name="Buckhaults P."/>
            <person name="Farrell C."/>
            <person name="Meeh P."/>
            <person name="Markowitz S.D."/>
            <person name="Willis J."/>
            <person name="Dawson D."/>
            <person name="Willson J.K.V."/>
            <person name="Gazdar A.F."/>
            <person name="Hartigan J."/>
            <person name="Wu L."/>
            <person name="Liu C."/>
            <person name="Parmigiani G."/>
            <person name="Park B.H."/>
            <person name="Bachman K.E."/>
            <person name="Papadopoulos N."/>
            <person name="Vogelstein B."/>
            <person name="Kinzler K.W."/>
            <person name="Velculescu V.E."/>
        </authorList>
    </citation>
    <scope>VARIANT [LARGE SCALE ANALYSIS] VAL-20</scope>
</reference>
<feature type="signal peptide" evidence="4">
    <location>
        <begin position="1"/>
        <end position="20"/>
    </location>
</feature>
<feature type="chain" id="PRO_0000017164" description="BPI fold-containing family B member 2">
    <location>
        <begin position="21"/>
        <end position="458"/>
    </location>
</feature>
<feature type="modified residue" description="Phosphothreonine; by FAM20C" evidence="7">
    <location>
        <position position="52"/>
    </location>
</feature>
<feature type="modified residue" description="Phosphoserine; by FAM20C" evidence="7">
    <location>
        <position position="60"/>
    </location>
</feature>
<feature type="glycosylation site" description="N-linked (GlcNAc...) asparagine" evidence="5">
    <location>
        <position position="96"/>
    </location>
</feature>
<feature type="glycosylation site" description="N-linked (GlcNAc...) asparagine" evidence="2">
    <location>
        <position position="151"/>
    </location>
</feature>
<feature type="glycosylation site" description="N-linked (GlcNAc...) asparagine" evidence="5">
    <location>
        <position position="293"/>
    </location>
</feature>
<feature type="glycosylation site" description="N-linked (GlcNAc...) asparagine" evidence="5">
    <location>
        <position position="332"/>
    </location>
</feature>
<feature type="disulfide bond" evidence="1">
    <location>
        <begin position="137"/>
        <end position="174"/>
    </location>
</feature>
<feature type="sequence variant" id="VAR_036550" description="In a colorectal cancer sample; somatic mutation." evidence="6">
    <original>A</original>
    <variation>V</variation>
    <location>
        <position position="20"/>
    </location>
</feature>
<feature type="sequence variant" id="VAR_024515" description="In dbSNP:rs6088066.">
    <original>K</original>
    <variation>M</variation>
    <location>
        <position position="31"/>
    </location>
</feature>
<feature type="sequence variant" id="VAR_049740" description="In dbSNP:rs34128772.">
    <original>A</original>
    <variation>V</variation>
    <location>
        <position position="63"/>
    </location>
</feature>
<feature type="sequence conflict" description="In Ref. 2; AAQ89085." evidence="8" ref="2">
    <original>K</original>
    <variation>N</variation>
    <location>
        <position position="231"/>
    </location>
</feature>
<feature type="sequence conflict" description="In Ref. 6; AAH34415." evidence="8" ref="6">
    <original>V</original>
    <variation>G</variation>
    <location>
        <position position="257"/>
    </location>
</feature>
<protein>
    <recommendedName>
        <fullName>BPI fold-containing family B member 2</fullName>
    </recommendedName>
    <alternativeName>
        <fullName>Bactericidal/permeability-increasing protein-like 1</fullName>
        <shortName>BPI-like 1</shortName>
    </alternativeName>
    <alternativeName>
        <fullName>Long palate, lung and nasal epithelium carcinoma-associated protein 2</fullName>
    </alternativeName>
    <alternativeName>
        <fullName>RYSR</fullName>
    </alternativeName>
</protein>
<organism>
    <name type="scientific">Homo sapiens</name>
    <name type="common">Human</name>
    <dbReference type="NCBI Taxonomy" id="9606"/>
    <lineage>
        <taxon>Eukaryota</taxon>
        <taxon>Metazoa</taxon>
        <taxon>Chordata</taxon>
        <taxon>Craniata</taxon>
        <taxon>Vertebrata</taxon>
        <taxon>Euteleostomi</taxon>
        <taxon>Mammalia</taxon>
        <taxon>Eutheria</taxon>
        <taxon>Euarchontoglires</taxon>
        <taxon>Primates</taxon>
        <taxon>Haplorrhini</taxon>
        <taxon>Catarrhini</taxon>
        <taxon>Hominidae</taxon>
        <taxon>Homo</taxon>
    </lineage>
</organism>